<sequence>HVDSGKSTTTGHLIYKCGGIDKRTIEKFEKEAQEMGKGSFKYAWVLDKLKAERERGITIDIALWKFETAKYYVTIIDAPGHRDFIKNMITGTSQADCAVLIVAAGTGEFEAGISKNGQTREHALLAFTLGVKQLIVGVNKMDSTEPPYSESRFEEIKKEVSSYIKKIGYNPAAVAFVPISGWHGDNMLEASTKMPWFKGWNVERKEGKAEGKCLIEALDAILPPARPTDKALRLPLQDVYKIGGIGTVPVGRVETGILKPGTIVVFAPANITTEVKSVEMHHEALQEAVPGDNVGFNVKNVSVKELRRGYVAGDSKNNPPKGAADFTAQVIVLNHPGQISNGYTPVLDCHTAHIACKFAEIKEKVDRRTGKSTEDNPKSIKSGDAAIVNLVPSKPLCVESFQEFPPLGRFAVR</sequence>
<protein>
    <recommendedName>
        <fullName>Elongation factor 1-alpha</fullName>
        <shortName>EF-1-alpha</shortName>
    </recommendedName>
</protein>
<evidence type="ECO:0000250" key="1"/>
<evidence type="ECO:0000255" key="2">
    <source>
        <dbReference type="PROSITE-ProRule" id="PRU01059"/>
    </source>
</evidence>
<proteinExistence type="inferred from homology"/>
<accession>P84319</accession>
<accession>P55276</accession>
<dbReference type="EMBL" id="U20127">
    <property type="protein sequence ID" value="AAA93207.1"/>
    <property type="molecule type" value="Genomic_DNA"/>
</dbReference>
<dbReference type="SMR" id="P84319"/>
<dbReference type="GO" id="GO:0005737">
    <property type="term" value="C:cytoplasm"/>
    <property type="evidence" value="ECO:0007669"/>
    <property type="project" value="UniProtKB-SubCell"/>
</dbReference>
<dbReference type="GO" id="GO:0005525">
    <property type="term" value="F:GTP binding"/>
    <property type="evidence" value="ECO:0007669"/>
    <property type="project" value="UniProtKB-KW"/>
</dbReference>
<dbReference type="GO" id="GO:0003924">
    <property type="term" value="F:GTPase activity"/>
    <property type="evidence" value="ECO:0007669"/>
    <property type="project" value="InterPro"/>
</dbReference>
<dbReference type="GO" id="GO:0003746">
    <property type="term" value="F:translation elongation factor activity"/>
    <property type="evidence" value="ECO:0007669"/>
    <property type="project" value="UniProtKB-KW"/>
</dbReference>
<dbReference type="CDD" id="cd01883">
    <property type="entry name" value="EF1_alpha"/>
    <property type="match status" value="1"/>
</dbReference>
<dbReference type="CDD" id="cd03693">
    <property type="entry name" value="EF1_alpha_II"/>
    <property type="match status" value="1"/>
</dbReference>
<dbReference type="CDD" id="cd03705">
    <property type="entry name" value="EF1_alpha_III"/>
    <property type="match status" value="1"/>
</dbReference>
<dbReference type="FunFam" id="2.40.30.10:FF:000003">
    <property type="entry name" value="Elongation factor 1-alpha"/>
    <property type="match status" value="1"/>
</dbReference>
<dbReference type="FunFam" id="2.40.30.10:FF:000005">
    <property type="entry name" value="Elongation factor 1-alpha"/>
    <property type="match status" value="1"/>
</dbReference>
<dbReference type="FunFam" id="3.40.50.300:FF:000090">
    <property type="entry name" value="Elongation factor 1-alpha"/>
    <property type="match status" value="1"/>
</dbReference>
<dbReference type="Gene3D" id="3.40.50.300">
    <property type="entry name" value="P-loop containing nucleotide triphosphate hydrolases"/>
    <property type="match status" value="1"/>
</dbReference>
<dbReference type="Gene3D" id="2.40.30.10">
    <property type="entry name" value="Translation factors"/>
    <property type="match status" value="2"/>
</dbReference>
<dbReference type="InterPro" id="IPR004161">
    <property type="entry name" value="EFTu-like_2"/>
</dbReference>
<dbReference type="InterPro" id="IPR031157">
    <property type="entry name" value="G_TR_CS"/>
</dbReference>
<dbReference type="InterPro" id="IPR054696">
    <property type="entry name" value="GTP-eEF1A_C"/>
</dbReference>
<dbReference type="InterPro" id="IPR027417">
    <property type="entry name" value="P-loop_NTPase"/>
</dbReference>
<dbReference type="InterPro" id="IPR000795">
    <property type="entry name" value="T_Tr_GTP-bd_dom"/>
</dbReference>
<dbReference type="InterPro" id="IPR050100">
    <property type="entry name" value="TRAFAC_GTPase_members"/>
</dbReference>
<dbReference type="InterPro" id="IPR009000">
    <property type="entry name" value="Transl_B-barrel_sf"/>
</dbReference>
<dbReference type="InterPro" id="IPR009001">
    <property type="entry name" value="Transl_elong_EF1A/Init_IF2_C"/>
</dbReference>
<dbReference type="InterPro" id="IPR004539">
    <property type="entry name" value="Transl_elong_EF1A_euk/arc"/>
</dbReference>
<dbReference type="NCBIfam" id="TIGR00483">
    <property type="entry name" value="EF-1_alpha"/>
    <property type="match status" value="1"/>
</dbReference>
<dbReference type="NCBIfam" id="NF008969">
    <property type="entry name" value="PRK12317.1"/>
    <property type="match status" value="1"/>
</dbReference>
<dbReference type="PANTHER" id="PTHR23115">
    <property type="entry name" value="TRANSLATION FACTOR"/>
    <property type="match status" value="1"/>
</dbReference>
<dbReference type="Pfam" id="PF22594">
    <property type="entry name" value="GTP-eEF1A_C"/>
    <property type="match status" value="1"/>
</dbReference>
<dbReference type="Pfam" id="PF00009">
    <property type="entry name" value="GTP_EFTU"/>
    <property type="match status" value="1"/>
</dbReference>
<dbReference type="Pfam" id="PF03144">
    <property type="entry name" value="GTP_EFTU_D2"/>
    <property type="match status" value="1"/>
</dbReference>
<dbReference type="PRINTS" id="PR00315">
    <property type="entry name" value="ELONGATNFCT"/>
</dbReference>
<dbReference type="SUPFAM" id="SSF50465">
    <property type="entry name" value="EF-Tu/eEF-1alpha/eIF2-gamma C-terminal domain"/>
    <property type="match status" value="1"/>
</dbReference>
<dbReference type="SUPFAM" id="SSF52540">
    <property type="entry name" value="P-loop containing nucleoside triphosphate hydrolases"/>
    <property type="match status" value="1"/>
</dbReference>
<dbReference type="SUPFAM" id="SSF50447">
    <property type="entry name" value="Translation proteins"/>
    <property type="match status" value="1"/>
</dbReference>
<dbReference type="PROSITE" id="PS00301">
    <property type="entry name" value="G_TR_1"/>
    <property type="match status" value="1"/>
</dbReference>
<dbReference type="PROSITE" id="PS51722">
    <property type="entry name" value="G_TR_2"/>
    <property type="match status" value="1"/>
</dbReference>
<organism>
    <name type="scientific">Heliocheilus albipunctella</name>
    <name type="common">Millet head miner</name>
    <dbReference type="NCBI Taxonomy" id="38051"/>
    <lineage>
        <taxon>Eukaryota</taxon>
        <taxon>Metazoa</taxon>
        <taxon>Ecdysozoa</taxon>
        <taxon>Arthropoda</taxon>
        <taxon>Hexapoda</taxon>
        <taxon>Insecta</taxon>
        <taxon>Pterygota</taxon>
        <taxon>Neoptera</taxon>
        <taxon>Endopterygota</taxon>
        <taxon>Lepidoptera</taxon>
        <taxon>Glossata</taxon>
        <taxon>Ditrysia</taxon>
        <taxon>Noctuoidea</taxon>
        <taxon>Noctuidae</taxon>
        <taxon>Heliothinae</taxon>
        <taxon>Heliocheilus</taxon>
    </lineage>
</organism>
<comment type="function">
    <text>This protein promotes the GTP-dependent binding of aminoacyl-tRNA to the A-site of ribosomes during protein biosynthesis.</text>
</comment>
<comment type="subcellular location">
    <subcellularLocation>
        <location>Cytoplasm</location>
    </subcellularLocation>
</comment>
<comment type="similarity">
    <text evidence="2">Belongs to the TRAFAC class translation factor GTPase superfamily. Classic translation factor GTPase family. EF-Tu/EF-1A subfamily.</text>
</comment>
<keyword id="KW-0963">Cytoplasm</keyword>
<keyword id="KW-0251">Elongation factor</keyword>
<keyword id="KW-0342">GTP-binding</keyword>
<keyword id="KW-0547">Nucleotide-binding</keyword>
<keyword id="KW-0597">Phosphoprotein</keyword>
<keyword id="KW-0648">Protein biosynthesis</keyword>
<feature type="chain" id="PRO_0000090908" description="Elongation factor 1-alpha">
    <location>
        <begin position="1" status="less than"/>
        <end position="413" status="greater than"/>
    </location>
</feature>
<feature type="domain" description="tr-type G" evidence="2">
    <location>
        <begin position="1" status="less than"/>
        <end position="228"/>
    </location>
</feature>
<feature type="binding site" evidence="1">
    <location>
        <begin position="1" status="less than"/>
        <end position="7"/>
    </location>
    <ligand>
        <name>GTP</name>
        <dbReference type="ChEBI" id="CHEBI:37565"/>
    </ligand>
</feature>
<feature type="binding site" evidence="1">
    <location>
        <begin position="77"/>
        <end position="81"/>
    </location>
    <ligand>
        <name>GTP</name>
        <dbReference type="ChEBI" id="CHEBI:37565"/>
    </ligand>
</feature>
<feature type="binding site" evidence="1">
    <location>
        <begin position="139"/>
        <end position="142"/>
    </location>
    <ligand>
        <name>GTP</name>
        <dbReference type="ChEBI" id="CHEBI:37565"/>
    </ligand>
</feature>
<feature type="modified residue" description="5-glutamyl glycerylphosphorylethanolamine" evidence="1">
    <location>
        <position position="287"/>
    </location>
</feature>
<feature type="modified residue" description="5-glutamyl glycerylphosphorylethanolamine" evidence="1">
    <location>
        <position position="360"/>
    </location>
</feature>
<feature type="non-terminal residue">
    <location>
        <position position="1"/>
    </location>
</feature>
<feature type="non-terminal residue">
    <location>
        <position position="413"/>
    </location>
</feature>
<reference key="1">
    <citation type="journal article" date="1995" name="Mol. Biol. Evol.">
        <title>A highly conserved nuclear gene for low-level phylogenetics: elongation factor-1 alpha recovers morphology-based tree for heliothine moths.</title>
        <authorList>
            <person name="Cho S."/>
            <person name="Mitchell A."/>
            <person name="Regier J.C."/>
            <person name="Mitter C."/>
            <person name="Poole R.W."/>
            <person name="Friedlander T.P."/>
            <person name="Zhao S."/>
        </authorList>
    </citation>
    <scope>NUCLEOTIDE SEQUENCE [GENOMIC DNA]</scope>
</reference>
<name>EF1A_HELAL</name>